<dbReference type="EMBL" id="CP000436">
    <property type="protein sequence ID" value="ABI24344.1"/>
    <property type="molecule type" value="Genomic_DNA"/>
</dbReference>
<dbReference type="SMR" id="Q0I159"/>
<dbReference type="KEGG" id="hso:HS_0063"/>
<dbReference type="eggNOG" id="COG0185">
    <property type="taxonomic scope" value="Bacteria"/>
</dbReference>
<dbReference type="HOGENOM" id="CLU_144911_0_1_6"/>
<dbReference type="GO" id="GO:0005737">
    <property type="term" value="C:cytoplasm"/>
    <property type="evidence" value="ECO:0007669"/>
    <property type="project" value="UniProtKB-ARBA"/>
</dbReference>
<dbReference type="GO" id="GO:0015935">
    <property type="term" value="C:small ribosomal subunit"/>
    <property type="evidence" value="ECO:0007669"/>
    <property type="project" value="InterPro"/>
</dbReference>
<dbReference type="GO" id="GO:0019843">
    <property type="term" value="F:rRNA binding"/>
    <property type="evidence" value="ECO:0007669"/>
    <property type="project" value="UniProtKB-UniRule"/>
</dbReference>
<dbReference type="GO" id="GO:0003735">
    <property type="term" value="F:structural constituent of ribosome"/>
    <property type="evidence" value="ECO:0007669"/>
    <property type="project" value="InterPro"/>
</dbReference>
<dbReference type="GO" id="GO:0000028">
    <property type="term" value="P:ribosomal small subunit assembly"/>
    <property type="evidence" value="ECO:0007669"/>
    <property type="project" value="TreeGrafter"/>
</dbReference>
<dbReference type="GO" id="GO:0006412">
    <property type="term" value="P:translation"/>
    <property type="evidence" value="ECO:0007669"/>
    <property type="project" value="UniProtKB-UniRule"/>
</dbReference>
<dbReference type="FunFam" id="3.30.860.10:FF:000001">
    <property type="entry name" value="30S ribosomal protein S19"/>
    <property type="match status" value="1"/>
</dbReference>
<dbReference type="Gene3D" id="3.30.860.10">
    <property type="entry name" value="30s Ribosomal Protein S19, Chain A"/>
    <property type="match status" value="1"/>
</dbReference>
<dbReference type="HAMAP" id="MF_00531">
    <property type="entry name" value="Ribosomal_uS19"/>
    <property type="match status" value="1"/>
</dbReference>
<dbReference type="InterPro" id="IPR002222">
    <property type="entry name" value="Ribosomal_uS19"/>
</dbReference>
<dbReference type="InterPro" id="IPR005732">
    <property type="entry name" value="Ribosomal_uS19_bac-type"/>
</dbReference>
<dbReference type="InterPro" id="IPR020934">
    <property type="entry name" value="Ribosomal_uS19_CS"/>
</dbReference>
<dbReference type="InterPro" id="IPR023575">
    <property type="entry name" value="Ribosomal_uS19_SF"/>
</dbReference>
<dbReference type="NCBIfam" id="TIGR01050">
    <property type="entry name" value="rpsS_bact"/>
    <property type="match status" value="1"/>
</dbReference>
<dbReference type="PANTHER" id="PTHR11880">
    <property type="entry name" value="RIBOSOMAL PROTEIN S19P FAMILY MEMBER"/>
    <property type="match status" value="1"/>
</dbReference>
<dbReference type="PANTHER" id="PTHR11880:SF8">
    <property type="entry name" value="SMALL RIBOSOMAL SUBUNIT PROTEIN US19M"/>
    <property type="match status" value="1"/>
</dbReference>
<dbReference type="Pfam" id="PF00203">
    <property type="entry name" value="Ribosomal_S19"/>
    <property type="match status" value="1"/>
</dbReference>
<dbReference type="PIRSF" id="PIRSF002144">
    <property type="entry name" value="Ribosomal_S19"/>
    <property type="match status" value="1"/>
</dbReference>
<dbReference type="PRINTS" id="PR00975">
    <property type="entry name" value="RIBOSOMALS19"/>
</dbReference>
<dbReference type="SUPFAM" id="SSF54570">
    <property type="entry name" value="Ribosomal protein S19"/>
    <property type="match status" value="1"/>
</dbReference>
<dbReference type="PROSITE" id="PS00323">
    <property type="entry name" value="RIBOSOMAL_S19"/>
    <property type="match status" value="1"/>
</dbReference>
<name>RS19_HISS1</name>
<evidence type="ECO:0000255" key="1">
    <source>
        <dbReference type="HAMAP-Rule" id="MF_00531"/>
    </source>
</evidence>
<evidence type="ECO:0000305" key="2"/>
<proteinExistence type="inferred from homology"/>
<keyword id="KW-0687">Ribonucleoprotein</keyword>
<keyword id="KW-0689">Ribosomal protein</keyword>
<keyword id="KW-0694">RNA-binding</keyword>
<keyword id="KW-0699">rRNA-binding</keyword>
<protein>
    <recommendedName>
        <fullName evidence="1">Small ribosomal subunit protein uS19</fullName>
    </recommendedName>
    <alternativeName>
        <fullName evidence="2">30S ribosomal protein S19</fullName>
    </alternativeName>
</protein>
<sequence>MPRSLKKGPFLDLHLLKKVEKAVESGDKKPIKTWSRRSMIIPSMIGLTIAVHNGRQHVPVYVSDEMIGHKLGEFAPTRTYRGHAADKKAKK</sequence>
<feature type="chain" id="PRO_0000265369" description="Small ribosomal subunit protein uS19">
    <location>
        <begin position="1"/>
        <end position="91"/>
    </location>
</feature>
<gene>
    <name evidence="1" type="primary">rpsS</name>
    <name type="ordered locus">HS_0063</name>
</gene>
<organism>
    <name type="scientific">Histophilus somni (strain 129Pt)</name>
    <name type="common">Haemophilus somnus</name>
    <dbReference type="NCBI Taxonomy" id="205914"/>
    <lineage>
        <taxon>Bacteria</taxon>
        <taxon>Pseudomonadati</taxon>
        <taxon>Pseudomonadota</taxon>
        <taxon>Gammaproteobacteria</taxon>
        <taxon>Pasteurellales</taxon>
        <taxon>Pasteurellaceae</taxon>
        <taxon>Histophilus</taxon>
    </lineage>
</organism>
<comment type="function">
    <text evidence="1">Protein S19 forms a complex with S13 that binds strongly to the 16S ribosomal RNA.</text>
</comment>
<comment type="similarity">
    <text evidence="1">Belongs to the universal ribosomal protein uS19 family.</text>
</comment>
<accession>Q0I159</accession>
<reference key="1">
    <citation type="journal article" date="2007" name="J. Bacteriol.">
        <title>Complete genome sequence of Haemophilus somnus (Histophilus somni) strain 129Pt and comparison to Haemophilus ducreyi 35000HP and Haemophilus influenzae Rd.</title>
        <authorList>
            <person name="Challacombe J.F."/>
            <person name="Duncan A.J."/>
            <person name="Brettin T.S."/>
            <person name="Bruce D."/>
            <person name="Chertkov O."/>
            <person name="Detter J.C."/>
            <person name="Han C.S."/>
            <person name="Misra M."/>
            <person name="Richardson P."/>
            <person name="Tapia R."/>
            <person name="Thayer N."/>
            <person name="Xie G."/>
            <person name="Inzana T.J."/>
        </authorList>
    </citation>
    <scope>NUCLEOTIDE SEQUENCE [LARGE SCALE GENOMIC DNA]</scope>
    <source>
        <strain>129Pt</strain>
    </source>
</reference>